<feature type="chain" id="PRO_0000194134" description="Bifunctional riboflavin kinase/FMN adenylyltransferase">
    <location>
        <begin position="1"/>
        <end position="313"/>
    </location>
</feature>
<name>RIBF_BUCAI</name>
<organism>
    <name type="scientific">Buchnera aphidicola subsp. Acyrthosiphon pisum (strain APS)</name>
    <name type="common">Acyrthosiphon pisum symbiotic bacterium</name>
    <dbReference type="NCBI Taxonomy" id="107806"/>
    <lineage>
        <taxon>Bacteria</taxon>
        <taxon>Pseudomonadati</taxon>
        <taxon>Pseudomonadota</taxon>
        <taxon>Gammaproteobacteria</taxon>
        <taxon>Enterobacterales</taxon>
        <taxon>Erwiniaceae</taxon>
        <taxon>Buchnera</taxon>
    </lineage>
</organism>
<evidence type="ECO:0000250" key="1">
    <source>
        <dbReference type="UniProtKB" id="Q59263"/>
    </source>
</evidence>
<evidence type="ECO:0000305" key="2"/>
<sequence>MKIIRGIHNIKEINSNSVVTIGNFDGIHLGHQKLFSHIYQIGQKYKLSTIVVLFEPQPLEFLRKNNAPVRITKFREKIRRISSYNFDSILCVKFNKSFQSLSAKDFIINILINKLHLKFIVIGNDFRFGFQRNGNINLLKKLGYKYQFNVIKIRPLYKNNIKISSTNIRKALSENNIKLASLLLGRVFSISGRVIHGNKIGRTMNYPTANILLSKNFLLTNGVYAVKIKYCPNKYAIGISNIGIKPSFSNTQKNKLLEVYLFDIKIDLYGKYIEIFIYKKIRDEQFFPSKKELKNQISQDILIVQKYFNIHKN</sequence>
<comment type="function">
    <text evidence="1">Catalyzes the phosphorylation of riboflavin to FMN followed by the adenylation of FMN to FAD.</text>
</comment>
<comment type="catalytic activity">
    <reaction evidence="1">
        <text>riboflavin + ATP = FMN + ADP + H(+)</text>
        <dbReference type="Rhea" id="RHEA:14357"/>
        <dbReference type="ChEBI" id="CHEBI:15378"/>
        <dbReference type="ChEBI" id="CHEBI:30616"/>
        <dbReference type="ChEBI" id="CHEBI:57986"/>
        <dbReference type="ChEBI" id="CHEBI:58210"/>
        <dbReference type="ChEBI" id="CHEBI:456216"/>
        <dbReference type="EC" id="2.7.1.26"/>
    </reaction>
</comment>
<comment type="catalytic activity">
    <reaction evidence="1">
        <text>FMN + ATP + H(+) = FAD + diphosphate</text>
        <dbReference type="Rhea" id="RHEA:17237"/>
        <dbReference type="ChEBI" id="CHEBI:15378"/>
        <dbReference type="ChEBI" id="CHEBI:30616"/>
        <dbReference type="ChEBI" id="CHEBI:33019"/>
        <dbReference type="ChEBI" id="CHEBI:57692"/>
        <dbReference type="ChEBI" id="CHEBI:58210"/>
        <dbReference type="EC" id="2.7.7.2"/>
    </reaction>
</comment>
<comment type="pathway">
    <text evidence="1">Cofactor biosynthesis; FAD biosynthesis; FAD from FMN: step 1/1.</text>
</comment>
<comment type="pathway">
    <text evidence="1">Cofactor biosynthesis; FMN biosynthesis; FMN from riboflavin (ATP route): step 1/1.</text>
</comment>
<comment type="similarity">
    <text evidence="2">Belongs to the RibF family.</text>
</comment>
<accession>P57250</accession>
<gene>
    <name type="primary">ribF</name>
    <name type="ordered locus">BU150</name>
</gene>
<reference key="1">
    <citation type="journal article" date="2000" name="Nature">
        <title>Genome sequence of the endocellular bacterial symbiont of aphids Buchnera sp. APS.</title>
        <authorList>
            <person name="Shigenobu S."/>
            <person name="Watanabe H."/>
            <person name="Hattori M."/>
            <person name="Sakaki Y."/>
            <person name="Ishikawa H."/>
        </authorList>
    </citation>
    <scope>NUCLEOTIDE SEQUENCE [LARGE SCALE GENOMIC DNA]</scope>
    <source>
        <strain>APS</strain>
    </source>
</reference>
<keyword id="KW-0067">ATP-binding</keyword>
<keyword id="KW-0274">FAD</keyword>
<keyword id="KW-0285">Flavoprotein</keyword>
<keyword id="KW-0288">FMN</keyword>
<keyword id="KW-0418">Kinase</keyword>
<keyword id="KW-0511">Multifunctional enzyme</keyword>
<keyword id="KW-0547">Nucleotide-binding</keyword>
<keyword id="KW-0548">Nucleotidyltransferase</keyword>
<keyword id="KW-1185">Reference proteome</keyword>
<keyword id="KW-0808">Transferase</keyword>
<protein>
    <recommendedName>
        <fullName evidence="1">Bifunctional riboflavin kinase/FMN adenylyltransferase</fullName>
    </recommendedName>
    <alternativeName>
        <fullName evidence="1">Riboflavin biosynthesis protein RibF</fullName>
    </alternativeName>
    <domain>
        <recommendedName>
            <fullName evidence="1">Riboflavin kinase</fullName>
            <ecNumber evidence="1">2.7.1.26</ecNumber>
        </recommendedName>
        <alternativeName>
            <fullName evidence="1">Flavokinase</fullName>
        </alternativeName>
    </domain>
    <domain>
        <recommendedName>
            <fullName evidence="1">FMN adenylyltransferase</fullName>
            <ecNumber evidence="1">2.7.7.2</ecNumber>
        </recommendedName>
        <alternativeName>
            <fullName evidence="1">FAD pyrophosphorylase</fullName>
        </alternativeName>
        <alternativeName>
            <fullName evidence="1">FAD synthase</fullName>
        </alternativeName>
    </domain>
</protein>
<dbReference type="EC" id="2.7.1.26" evidence="1"/>
<dbReference type="EC" id="2.7.7.2" evidence="1"/>
<dbReference type="EMBL" id="BA000003">
    <property type="protein sequence ID" value="BAB12868.1"/>
    <property type="molecule type" value="Genomic_DNA"/>
</dbReference>
<dbReference type="RefSeq" id="NP_239982.1">
    <property type="nucleotide sequence ID" value="NC_002528.1"/>
</dbReference>
<dbReference type="RefSeq" id="WP_009874106.1">
    <property type="nucleotide sequence ID" value="NC_002528.1"/>
</dbReference>
<dbReference type="SMR" id="P57250"/>
<dbReference type="STRING" id="563178.BUAP5A_148"/>
<dbReference type="EnsemblBacteria" id="BAB12868">
    <property type="protein sequence ID" value="BAB12868"/>
    <property type="gene ID" value="BAB12868"/>
</dbReference>
<dbReference type="KEGG" id="buc:BU150"/>
<dbReference type="PATRIC" id="fig|107806.10.peg.159"/>
<dbReference type="eggNOG" id="COG0196">
    <property type="taxonomic scope" value="Bacteria"/>
</dbReference>
<dbReference type="HOGENOM" id="CLU_048437_0_2_6"/>
<dbReference type="UniPathway" id="UPA00276">
    <property type="reaction ID" value="UER00406"/>
</dbReference>
<dbReference type="UniPathway" id="UPA00277">
    <property type="reaction ID" value="UER00407"/>
</dbReference>
<dbReference type="Proteomes" id="UP000001806">
    <property type="component" value="Chromosome"/>
</dbReference>
<dbReference type="GO" id="GO:0005524">
    <property type="term" value="F:ATP binding"/>
    <property type="evidence" value="ECO:0007669"/>
    <property type="project" value="UniProtKB-KW"/>
</dbReference>
<dbReference type="GO" id="GO:0003919">
    <property type="term" value="F:FMN adenylyltransferase activity"/>
    <property type="evidence" value="ECO:0007669"/>
    <property type="project" value="UniProtKB-EC"/>
</dbReference>
<dbReference type="GO" id="GO:0008531">
    <property type="term" value="F:riboflavin kinase activity"/>
    <property type="evidence" value="ECO:0007669"/>
    <property type="project" value="UniProtKB-EC"/>
</dbReference>
<dbReference type="GO" id="GO:0006747">
    <property type="term" value="P:FAD biosynthetic process"/>
    <property type="evidence" value="ECO:0007669"/>
    <property type="project" value="UniProtKB-UniPathway"/>
</dbReference>
<dbReference type="GO" id="GO:0009398">
    <property type="term" value="P:FMN biosynthetic process"/>
    <property type="evidence" value="ECO:0007669"/>
    <property type="project" value="UniProtKB-UniPathway"/>
</dbReference>
<dbReference type="GO" id="GO:0009231">
    <property type="term" value="P:riboflavin biosynthetic process"/>
    <property type="evidence" value="ECO:0007669"/>
    <property type="project" value="InterPro"/>
</dbReference>
<dbReference type="CDD" id="cd02064">
    <property type="entry name" value="FAD_synthetase_N"/>
    <property type="match status" value="1"/>
</dbReference>
<dbReference type="FunFam" id="3.40.50.620:FF:000021">
    <property type="entry name" value="Riboflavin biosynthesis protein"/>
    <property type="match status" value="1"/>
</dbReference>
<dbReference type="Gene3D" id="3.40.50.620">
    <property type="entry name" value="HUPs"/>
    <property type="match status" value="1"/>
</dbReference>
<dbReference type="Gene3D" id="2.40.30.30">
    <property type="entry name" value="Riboflavin kinase-like"/>
    <property type="match status" value="1"/>
</dbReference>
<dbReference type="InterPro" id="IPR015864">
    <property type="entry name" value="FAD_synthase"/>
</dbReference>
<dbReference type="InterPro" id="IPR023468">
    <property type="entry name" value="Riboflavin_kinase"/>
</dbReference>
<dbReference type="InterPro" id="IPR002606">
    <property type="entry name" value="Riboflavin_kinase_bac"/>
</dbReference>
<dbReference type="InterPro" id="IPR015865">
    <property type="entry name" value="Riboflavin_kinase_bac/euk"/>
</dbReference>
<dbReference type="InterPro" id="IPR023465">
    <property type="entry name" value="Riboflavin_kinase_dom_sf"/>
</dbReference>
<dbReference type="InterPro" id="IPR014729">
    <property type="entry name" value="Rossmann-like_a/b/a_fold"/>
</dbReference>
<dbReference type="NCBIfam" id="NF004159">
    <property type="entry name" value="PRK05627.1-2"/>
    <property type="match status" value="1"/>
</dbReference>
<dbReference type="NCBIfam" id="NF004162">
    <property type="entry name" value="PRK05627.1-5"/>
    <property type="match status" value="1"/>
</dbReference>
<dbReference type="NCBIfam" id="NF004163">
    <property type="entry name" value="PRK05627.1-6"/>
    <property type="match status" value="1"/>
</dbReference>
<dbReference type="NCBIfam" id="TIGR00083">
    <property type="entry name" value="ribF"/>
    <property type="match status" value="1"/>
</dbReference>
<dbReference type="PANTHER" id="PTHR22749:SF6">
    <property type="entry name" value="RIBOFLAVIN KINASE"/>
    <property type="match status" value="1"/>
</dbReference>
<dbReference type="PANTHER" id="PTHR22749">
    <property type="entry name" value="RIBOFLAVIN KINASE/FMN ADENYLYLTRANSFERASE"/>
    <property type="match status" value="1"/>
</dbReference>
<dbReference type="Pfam" id="PF06574">
    <property type="entry name" value="FAD_syn"/>
    <property type="match status" value="1"/>
</dbReference>
<dbReference type="Pfam" id="PF01687">
    <property type="entry name" value="Flavokinase"/>
    <property type="match status" value="1"/>
</dbReference>
<dbReference type="PIRSF" id="PIRSF004491">
    <property type="entry name" value="FAD_Synth"/>
    <property type="match status" value="1"/>
</dbReference>
<dbReference type="SMART" id="SM00904">
    <property type="entry name" value="Flavokinase"/>
    <property type="match status" value="1"/>
</dbReference>
<dbReference type="SUPFAM" id="SSF52374">
    <property type="entry name" value="Nucleotidylyl transferase"/>
    <property type="match status" value="1"/>
</dbReference>
<dbReference type="SUPFAM" id="SSF82114">
    <property type="entry name" value="Riboflavin kinase-like"/>
    <property type="match status" value="1"/>
</dbReference>
<proteinExistence type="inferred from homology"/>